<reference key="1">
    <citation type="journal article" date="1994" name="Gene">
        <title>Structural analysis of the chloroplastic and cytoplasmic aldolase-encoding genes implicated the occurrence of multiple loci in rice.</title>
        <authorList>
            <person name="Tsutsumi K."/>
            <person name="Kagaya Y."/>
            <person name="Hidaka S."/>
            <person name="Suzuki J."/>
            <person name="Tokairin Y."/>
            <person name="Hirai T."/>
            <person name="Hu D."/>
            <person name="Ishikawa K."/>
            <person name="Ejiri S."/>
        </authorList>
    </citation>
    <scope>NUCLEOTIDE SEQUENCE [GENOMIC DNA]</scope>
</reference>
<reference key="2">
    <citation type="journal article" date="2003" name="Science">
        <title>In-depth view of structure, activity, and evolution of rice chromosome 10.</title>
        <authorList>
            <person name="Yu Y."/>
            <person name="Rambo T."/>
            <person name="Currie J."/>
            <person name="Saski C."/>
            <person name="Kim H.-R."/>
            <person name="Collura K."/>
            <person name="Thompson S."/>
            <person name="Simmons J."/>
            <person name="Yang T.-J."/>
            <person name="Nah G."/>
            <person name="Patel A.J."/>
            <person name="Thurmond S."/>
            <person name="Henry D."/>
            <person name="Oates R."/>
            <person name="Palmer M."/>
            <person name="Pries G."/>
            <person name="Gibson J."/>
            <person name="Anderson H."/>
            <person name="Paradkar M."/>
            <person name="Crane L."/>
            <person name="Dale J."/>
            <person name="Carver M.B."/>
            <person name="Wood T."/>
            <person name="Frisch D."/>
            <person name="Engler F."/>
            <person name="Soderlund C."/>
            <person name="Palmer L.E."/>
            <person name="Teytelman L."/>
            <person name="Nascimento L."/>
            <person name="De la Bastide M."/>
            <person name="Spiegel L."/>
            <person name="Ware D."/>
            <person name="O'Shaughnessy A."/>
            <person name="Dike S."/>
            <person name="Dedhia N."/>
            <person name="Preston R."/>
            <person name="Huang E."/>
            <person name="Ferraro K."/>
            <person name="Kuit K."/>
            <person name="Miller B."/>
            <person name="Zutavern T."/>
            <person name="Katzenberger F."/>
            <person name="Muller S."/>
            <person name="Balija V."/>
            <person name="Martienssen R.A."/>
            <person name="Stein L."/>
            <person name="Minx P."/>
            <person name="Johnson D."/>
            <person name="Cordum H."/>
            <person name="Mardis E."/>
            <person name="Cheng Z."/>
            <person name="Jiang J."/>
            <person name="Wilson R."/>
            <person name="McCombie W.R."/>
            <person name="Wing R.A."/>
            <person name="Yuan Q."/>
            <person name="Ouyang S."/>
            <person name="Liu J."/>
            <person name="Jones K.M."/>
            <person name="Gansberger K."/>
            <person name="Moffat K."/>
            <person name="Hill J."/>
            <person name="Tsitrin T."/>
            <person name="Overton L."/>
            <person name="Bera J."/>
            <person name="Kim M."/>
            <person name="Jin S."/>
            <person name="Tallon L."/>
            <person name="Ciecko A."/>
            <person name="Pai G."/>
            <person name="Van Aken S."/>
            <person name="Utterback T."/>
            <person name="Reidmuller S."/>
            <person name="Bormann J."/>
            <person name="Feldblyum T."/>
            <person name="Hsiao J."/>
            <person name="Zismann V."/>
            <person name="Blunt S."/>
            <person name="de Vazeille A.R."/>
            <person name="Shaffer T."/>
            <person name="Koo H."/>
            <person name="Suh B."/>
            <person name="Yang Q."/>
            <person name="Haas B."/>
            <person name="Peterson J."/>
            <person name="Pertea M."/>
            <person name="Volfovsky N."/>
            <person name="Wortman J."/>
            <person name="White O."/>
            <person name="Salzberg S.L."/>
            <person name="Fraser C.M."/>
            <person name="Buell C.R."/>
            <person name="Messing J."/>
            <person name="Song R."/>
            <person name="Fuks G."/>
            <person name="Llaca V."/>
            <person name="Kovchak S."/>
            <person name="Young S."/>
            <person name="Bowers J.E."/>
            <person name="Paterson A.H."/>
            <person name="Johns M.A."/>
            <person name="Mao L."/>
            <person name="Pan H."/>
            <person name="Dean R.A."/>
        </authorList>
    </citation>
    <scope>NUCLEOTIDE SEQUENCE [LARGE SCALE GENOMIC DNA]</scope>
    <source>
        <strain>cv. Nipponbare</strain>
    </source>
</reference>
<reference key="3">
    <citation type="journal article" date="2005" name="Nature">
        <title>The map-based sequence of the rice genome.</title>
        <authorList>
            <consortium name="International rice genome sequencing project (IRGSP)"/>
        </authorList>
    </citation>
    <scope>NUCLEOTIDE SEQUENCE [LARGE SCALE GENOMIC DNA]</scope>
    <source>
        <strain>cv. Nipponbare</strain>
    </source>
</reference>
<reference key="4">
    <citation type="journal article" date="2013" name="Rice">
        <title>Improvement of the Oryza sativa Nipponbare reference genome using next generation sequence and optical map data.</title>
        <authorList>
            <person name="Kawahara Y."/>
            <person name="de la Bastide M."/>
            <person name="Hamilton J.P."/>
            <person name="Kanamori H."/>
            <person name="McCombie W.R."/>
            <person name="Ouyang S."/>
            <person name="Schwartz D.C."/>
            <person name="Tanaka T."/>
            <person name="Wu J."/>
            <person name="Zhou S."/>
            <person name="Childs K.L."/>
            <person name="Davidson R.M."/>
            <person name="Lin H."/>
            <person name="Quesada-Ocampo L."/>
            <person name="Vaillancourt B."/>
            <person name="Sakai H."/>
            <person name="Lee S.S."/>
            <person name="Kim J."/>
            <person name="Numa H."/>
            <person name="Itoh T."/>
            <person name="Buell C.R."/>
            <person name="Matsumoto T."/>
        </authorList>
    </citation>
    <scope>GENOME REANNOTATION</scope>
    <source>
        <strain>cv. Nipponbare</strain>
    </source>
</reference>
<reference key="5">
    <citation type="journal article" date="2005" name="PLoS Biol.">
        <title>The genomes of Oryza sativa: a history of duplications.</title>
        <authorList>
            <person name="Yu J."/>
            <person name="Wang J."/>
            <person name="Lin W."/>
            <person name="Li S."/>
            <person name="Li H."/>
            <person name="Zhou J."/>
            <person name="Ni P."/>
            <person name="Dong W."/>
            <person name="Hu S."/>
            <person name="Zeng C."/>
            <person name="Zhang J."/>
            <person name="Zhang Y."/>
            <person name="Li R."/>
            <person name="Xu Z."/>
            <person name="Li S."/>
            <person name="Li X."/>
            <person name="Zheng H."/>
            <person name="Cong L."/>
            <person name="Lin L."/>
            <person name="Yin J."/>
            <person name="Geng J."/>
            <person name="Li G."/>
            <person name="Shi J."/>
            <person name="Liu J."/>
            <person name="Lv H."/>
            <person name="Li J."/>
            <person name="Wang J."/>
            <person name="Deng Y."/>
            <person name="Ran L."/>
            <person name="Shi X."/>
            <person name="Wang X."/>
            <person name="Wu Q."/>
            <person name="Li C."/>
            <person name="Ren X."/>
            <person name="Wang J."/>
            <person name="Wang X."/>
            <person name="Li D."/>
            <person name="Liu D."/>
            <person name="Zhang X."/>
            <person name="Ji Z."/>
            <person name="Zhao W."/>
            <person name="Sun Y."/>
            <person name="Zhang Z."/>
            <person name="Bao J."/>
            <person name="Han Y."/>
            <person name="Dong L."/>
            <person name="Ji J."/>
            <person name="Chen P."/>
            <person name="Wu S."/>
            <person name="Liu J."/>
            <person name="Xiao Y."/>
            <person name="Bu D."/>
            <person name="Tan J."/>
            <person name="Yang L."/>
            <person name="Ye C."/>
            <person name="Zhang J."/>
            <person name="Xu J."/>
            <person name="Zhou Y."/>
            <person name="Yu Y."/>
            <person name="Zhang B."/>
            <person name="Zhuang S."/>
            <person name="Wei H."/>
            <person name="Liu B."/>
            <person name="Lei M."/>
            <person name="Yu H."/>
            <person name="Li Y."/>
            <person name="Xu H."/>
            <person name="Wei S."/>
            <person name="He X."/>
            <person name="Fang L."/>
            <person name="Zhang Z."/>
            <person name="Zhang Y."/>
            <person name="Huang X."/>
            <person name="Su Z."/>
            <person name="Tong W."/>
            <person name="Li J."/>
            <person name="Tong Z."/>
            <person name="Li S."/>
            <person name="Ye J."/>
            <person name="Wang L."/>
            <person name="Fang L."/>
            <person name="Lei T."/>
            <person name="Chen C.-S."/>
            <person name="Chen H.-C."/>
            <person name="Xu Z."/>
            <person name="Li H."/>
            <person name="Huang H."/>
            <person name="Zhang F."/>
            <person name="Xu H."/>
            <person name="Li N."/>
            <person name="Zhao C."/>
            <person name="Li S."/>
            <person name="Dong L."/>
            <person name="Huang Y."/>
            <person name="Li L."/>
            <person name="Xi Y."/>
            <person name="Qi Q."/>
            <person name="Li W."/>
            <person name="Zhang B."/>
            <person name="Hu W."/>
            <person name="Zhang Y."/>
            <person name="Tian X."/>
            <person name="Jiao Y."/>
            <person name="Liang X."/>
            <person name="Jin J."/>
            <person name="Gao L."/>
            <person name="Zheng W."/>
            <person name="Hao B."/>
            <person name="Liu S.-M."/>
            <person name="Wang W."/>
            <person name="Yuan L."/>
            <person name="Cao M."/>
            <person name="McDermott J."/>
            <person name="Samudrala R."/>
            <person name="Wang J."/>
            <person name="Wong G.K.-S."/>
            <person name="Yang H."/>
        </authorList>
    </citation>
    <scope>NUCLEOTIDE SEQUENCE [LARGE SCALE GENOMIC DNA]</scope>
    <source>
        <strain>cv. Nipponbare</strain>
    </source>
</reference>
<reference key="6">
    <citation type="journal article" date="2003" name="Science">
        <title>Collection, mapping, and annotation of over 28,000 cDNA clones from japonica rice.</title>
        <authorList>
            <consortium name="The rice full-length cDNA consortium"/>
        </authorList>
    </citation>
    <scope>NUCLEOTIDE SEQUENCE [LARGE SCALE MRNA]</scope>
    <source>
        <strain>cv. Nipponbare</strain>
    </source>
</reference>
<protein>
    <recommendedName>
        <fullName evidence="5">Fructose-bisphosphate aldolase 2, cytoplasmic</fullName>
        <ecNumber evidence="3">4.1.2.13</ecNumber>
    </recommendedName>
    <alternativeName>
        <fullName evidence="4">Cytoplasmic aldolase-alpha</fullName>
        <shortName evidence="4">AldC-alpha</shortName>
    </alternativeName>
</protein>
<organism>
    <name type="scientific">Oryza sativa subsp. japonica</name>
    <name type="common">Rice</name>
    <dbReference type="NCBI Taxonomy" id="39947"/>
    <lineage>
        <taxon>Eukaryota</taxon>
        <taxon>Viridiplantae</taxon>
        <taxon>Streptophyta</taxon>
        <taxon>Embryophyta</taxon>
        <taxon>Tracheophyta</taxon>
        <taxon>Spermatophyta</taxon>
        <taxon>Magnoliopsida</taxon>
        <taxon>Liliopsida</taxon>
        <taxon>Poales</taxon>
        <taxon>Poaceae</taxon>
        <taxon>BOP clade</taxon>
        <taxon>Oryzoideae</taxon>
        <taxon>Oryzeae</taxon>
        <taxon>Oryzinae</taxon>
        <taxon>Oryza</taxon>
        <taxon>Oryza sativa</taxon>
    </lineage>
</organism>
<dbReference type="EC" id="4.1.2.13" evidence="3"/>
<dbReference type="EMBL" id="D13512">
    <property type="protein sequence ID" value="BAA02729.1"/>
    <property type="molecule type" value="Genomic_DNA"/>
</dbReference>
<dbReference type="EMBL" id="DP000086">
    <property type="protein sequence ID" value="ABG65931.1"/>
    <property type="molecule type" value="Genomic_DNA"/>
</dbReference>
<dbReference type="EMBL" id="AP014966">
    <property type="protein sequence ID" value="BAT10026.1"/>
    <property type="molecule type" value="Genomic_DNA"/>
</dbReference>
<dbReference type="EMBL" id="CM000147">
    <property type="protein sequence ID" value="EAZ15405.1"/>
    <property type="molecule type" value="Genomic_DNA"/>
</dbReference>
<dbReference type="EMBL" id="AK071547">
    <property type="protein sequence ID" value="BAG92549.1"/>
    <property type="molecule type" value="mRNA"/>
</dbReference>
<dbReference type="EMBL" id="AK099184">
    <property type="protein sequence ID" value="BAG93981.1"/>
    <property type="molecule type" value="mRNA"/>
</dbReference>
<dbReference type="RefSeq" id="XP_015613786.1">
    <property type="nucleotide sequence ID" value="XM_015758300.1"/>
</dbReference>
<dbReference type="SMR" id="Q10A30"/>
<dbReference type="FunCoup" id="Q10A30">
    <property type="interactions" value="2041"/>
</dbReference>
<dbReference type="STRING" id="39947.Q10A30"/>
<dbReference type="iPTMnet" id="Q10A30"/>
<dbReference type="PaxDb" id="39947-Q10A30"/>
<dbReference type="EnsemblPlants" id="Os10t0163340-01">
    <property type="protein sequence ID" value="Os10t0163340-01"/>
    <property type="gene ID" value="Os10g0163340"/>
</dbReference>
<dbReference type="Gramene" id="Os10t0163340-01">
    <property type="protein sequence ID" value="Os10t0163340-01"/>
    <property type="gene ID" value="Os10g0163340"/>
</dbReference>
<dbReference type="eggNOG" id="KOG1557">
    <property type="taxonomic scope" value="Eukaryota"/>
</dbReference>
<dbReference type="HOGENOM" id="CLU_031243_0_2_1"/>
<dbReference type="InParanoid" id="Q10A30"/>
<dbReference type="OMA" id="EHIANTE"/>
<dbReference type="OrthoDB" id="36455at2759"/>
<dbReference type="PlantReactome" id="R-OSA-1119519">
    <property type="pathway name" value="Calvin cycle"/>
</dbReference>
<dbReference type="PlantReactome" id="R-OSA-1119570">
    <property type="pathway name" value="Cytosolic glycolysis"/>
</dbReference>
<dbReference type="UniPathway" id="UPA00109">
    <property type="reaction ID" value="UER00183"/>
</dbReference>
<dbReference type="Proteomes" id="UP000007752">
    <property type="component" value="Chromosome 10"/>
</dbReference>
<dbReference type="Proteomes" id="UP000059680">
    <property type="component" value="Chromosome 10"/>
</dbReference>
<dbReference type="ExpressionAtlas" id="Q10A30">
    <property type="expression patterns" value="baseline and differential"/>
</dbReference>
<dbReference type="GO" id="GO:0005829">
    <property type="term" value="C:cytosol"/>
    <property type="evidence" value="ECO:0000318"/>
    <property type="project" value="GO_Central"/>
</dbReference>
<dbReference type="GO" id="GO:0004332">
    <property type="term" value="F:fructose-bisphosphate aldolase activity"/>
    <property type="evidence" value="ECO:0000250"/>
    <property type="project" value="UniProtKB"/>
</dbReference>
<dbReference type="GO" id="GO:0030388">
    <property type="term" value="P:fructose 1,6-bisphosphate metabolic process"/>
    <property type="evidence" value="ECO:0000318"/>
    <property type="project" value="GO_Central"/>
</dbReference>
<dbReference type="GO" id="GO:0006094">
    <property type="term" value="P:gluconeogenesis"/>
    <property type="evidence" value="ECO:0000250"/>
    <property type="project" value="UniProtKB"/>
</dbReference>
<dbReference type="GO" id="GO:0006096">
    <property type="term" value="P:glycolytic process"/>
    <property type="evidence" value="ECO:0000250"/>
    <property type="project" value="UniProtKB"/>
</dbReference>
<dbReference type="CDD" id="cd00948">
    <property type="entry name" value="FBP_aldolase_I_a"/>
    <property type="match status" value="1"/>
</dbReference>
<dbReference type="FunFam" id="3.20.20.70:FF:000068">
    <property type="entry name" value="Fructose-bisphosphate aldolase"/>
    <property type="match status" value="1"/>
</dbReference>
<dbReference type="Gene3D" id="3.20.20.70">
    <property type="entry name" value="Aldolase class I"/>
    <property type="match status" value="1"/>
</dbReference>
<dbReference type="InterPro" id="IPR029768">
    <property type="entry name" value="Aldolase_I_AS"/>
</dbReference>
<dbReference type="InterPro" id="IPR013785">
    <property type="entry name" value="Aldolase_TIM"/>
</dbReference>
<dbReference type="InterPro" id="IPR000741">
    <property type="entry name" value="FBA_I"/>
</dbReference>
<dbReference type="NCBIfam" id="NF033379">
    <property type="entry name" value="FrucBisAld_I"/>
    <property type="match status" value="1"/>
</dbReference>
<dbReference type="PANTHER" id="PTHR11627">
    <property type="entry name" value="FRUCTOSE-BISPHOSPHATE ALDOLASE"/>
    <property type="match status" value="1"/>
</dbReference>
<dbReference type="Pfam" id="PF00274">
    <property type="entry name" value="Glycolytic"/>
    <property type="match status" value="1"/>
</dbReference>
<dbReference type="SUPFAM" id="SSF51569">
    <property type="entry name" value="Aldolase"/>
    <property type="match status" value="1"/>
</dbReference>
<dbReference type="PROSITE" id="PS00158">
    <property type="entry name" value="ALDOLASE_CLASS_I"/>
    <property type="match status" value="1"/>
</dbReference>
<feature type="chain" id="PRO_0000437242" description="Fructose-bisphosphate aldolase 2, cytoplasmic">
    <location>
        <begin position="1"/>
        <end position="358"/>
    </location>
</feature>
<feature type="active site" description="Proton acceptor" evidence="1">
    <location>
        <position position="183"/>
    </location>
</feature>
<feature type="active site" description="Schiff-base intermediate with dihydroxyacetone-P" evidence="1">
    <location>
        <position position="225"/>
    </location>
</feature>
<feature type="binding site" evidence="1">
    <location>
        <position position="39"/>
    </location>
    <ligand>
        <name>substrate</name>
    </ligand>
</feature>
<feature type="binding site" evidence="1">
    <location>
        <begin position="266"/>
        <end position="268"/>
    </location>
    <ligand>
        <name>substrate</name>
    </ligand>
</feature>
<feature type="binding site" evidence="1">
    <location>
        <position position="298"/>
    </location>
    <ligand>
        <name>substrate</name>
    </ligand>
</feature>
<feature type="site" description="Necessary for preference for fructose 1,6-bisphosphate over fructose 1-phosphate" evidence="1">
    <location>
        <position position="358"/>
    </location>
</feature>
<feature type="sequence conflict" description="In Ref. 1; BAA02729." evidence="5" ref="1">
    <original>V</original>
    <variation>I</variation>
    <location>
        <position position="92"/>
    </location>
</feature>
<sequence>MSAYCGKYKDELIKNAAYIGTPGKGILAADESTGTIGKRFASINVENVEDNRRAFRELLFCTPGALQYISGVILFDETLYQKTKDGKPFVDVLKEAGALPGIKVDKGTIEVAGTDKETTTQGHDDLGKQCAKYYEAGARFAKWRAVLKIGPNQPSQLAIDLNAQGLACYAIICQENGLVPIVEPEILVDGPHDIDRCAYVSEVVLAACYKALNEHHVLLEGTLLKPNMVTPGSDAKKVAPEVIAEYTVRTLQRTVPPAVPAIVFLSGGQSEEEATLNLNAMNKLSAKKPWSLSFSFGRALQQSTLKAWAGKTENVEKARAAFLVRCKANSEATLGTYKGDAVLGEGAAESLHVKDYKY</sequence>
<proteinExistence type="evidence at transcript level"/>
<gene>
    <name evidence="5" type="primary">FBA2</name>
    <name evidence="7" type="ordered locus">Os10g0163340</name>
    <name evidence="6" type="ordered locus">LOC_Os10g08022</name>
    <name evidence="8" type="ORF">OsJ_30817</name>
</gene>
<keyword id="KW-0963">Cytoplasm</keyword>
<keyword id="KW-0324">Glycolysis</keyword>
<keyword id="KW-0456">Lyase</keyword>
<keyword id="KW-1185">Reference proteome</keyword>
<keyword id="KW-0704">Schiff base</keyword>
<accession>Q10A30</accession>
<accession>Q40676</accession>
<evidence type="ECO:0000250" key="1">
    <source>
        <dbReference type="UniProtKB" id="P00883"/>
    </source>
</evidence>
<evidence type="ECO:0000250" key="2">
    <source>
        <dbReference type="UniProtKB" id="Q944G9"/>
    </source>
</evidence>
<evidence type="ECO:0000250" key="3">
    <source>
        <dbReference type="UniProtKB" id="Q9SJQ9"/>
    </source>
</evidence>
<evidence type="ECO:0000303" key="4">
    <source>
    </source>
</evidence>
<evidence type="ECO:0000305" key="5"/>
<evidence type="ECO:0000312" key="6">
    <source>
        <dbReference type="EMBL" id="ABG65931.1"/>
    </source>
</evidence>
<evidence type="ECO:0000312" key="7">
    <source>
        <dbReference type="EMBL" id="BAT10026.1"/>
    </source>
</evidence>
<evidence type="ECO:0000312" key="8">
    <source>
        <dbReference type="EMBL" id="EAZ15405.1"/>
    </source>
</evidence>
<comment type="function">
    <text evidence="3">Fructose-bisphosphate aldolase that plays a key role in glycolysis and gluconeogenesis.</text>
</comment>
<comment type="catalytic activity">
    <reaction evidence="3">
        <text>beta-D-fructose 1,6-bisphosphate = D-glyceraldehyde 3-phosphate + dihydroxyacetone phosphate</text>
        <dbReference type="Rhea" id="RHEA:14729"/>
        <dbReference type="ChEBI" id="CHEBI:32966"/>
        <dbReference type="ChEBI" id="CHEBI:57642"/>
        <dbReference type="ChEBI" id="CHEBI:59776"/>
        <dbReference type="EC" id="4.1.2.13"/>
    </reaction>
</comment>
<comment type="pathway">
    <text evidence="5">Carbohydrate degradation; glycolysis; D-glyceraldehyde 3-phosphate and glycerone phosphate from D-glucose: step 4/4.</text>
</comment>
<comment type="subunit">
    <text evidence="2">Homotetramer.</text>
</comment>
<comment type="subcellular location">
    <subcellularLocation>
        <location evidence="3">Cytoplasm</location>
        <location evidence="3">Cytosol</location>
    </subcellularLocation>
</comment>
<comment type="similarity">
    <text evidence="5">Belongs to the class I fructose-bisphosphate aldolase family.</text>
</comment>
<name>ALFC2_ORYSJ</name>